<reference key="1">
    <citation type="journal article" date="2009" name="BMC Genomics">
        <title>Metabolic analysis of the soil microbe Dechloromonas aromatica str. RCB: indications of a surprisingly complex life-style and cryptic anaerobic pathways for aromatic degradation.</title>
        <authorList>
            <person name="Salinero K.K."/>
            <person name="Keller K."/>
            <person name="Feil W.S."/>
            <person name="Feil H."/>
            <person name="Trong S."/>
            <person name="Di Bartolo G."/>
            <person name="Lapidus A."/>
        </authorList>
    </citation>
    <scope>NUCLEOTIDE SEQUENCE [LARGE SCALE GENOMIC DNA]</scope>
    <source>
        <strain>RCB</strain>
    </source>
</reference>
<name>RS6_DECAR</name>
<dbReference type="EMBL" id="CP000089">
    <property type="protein sequence ID" value="AAZ45972.1"/>
    <property type="molecule type" value="Genomic_DNA"/>
</dbReference>
<dbReference type="SMR" id="Q47GQ9"/>
<dbReference type="STRING" id="159087.Daro_1216"/>
<dbReference type="KEGG" id="dar:Daro_1216"/>
<dbReference type="eggNOG" id="COG0360">
    <property type="taxonomic scope" value="Bacteria"/>
</dbReference>
<dbReference type="HOGENOM" id="CLU_113441_6_1_4"/>
<dbReference type="OrthoDB" id="9812702at2"/>
<dbReference type="GO" id="GO:0022627">
    <property type="term" value="C:cytosolic small ribosomal subunit"/>
    <property type="evidence" value="ECO:0007669"/>
    <property type="project" value="TreeGrafter"/>
</dbReference>
<dbReference type="GO" id="GO:0070181">
    <property type="term" value="F:small ribosomal subunit rRNA binding"/>
    <property type="evidence" value="ECO:0007669"/>
    <property type="project" value="TreeGrafter"/>
</dbReference>
<dbReference type="GO" id="GO:0003735">
    <property type="term" value="F:structural constituent of ribosome"/>
    <property type="evidence" value="ECO:0007669"/>
    <property type="project" value="InterPro"/>
</dbReference>
<dbReference type="GO" id="GO:0006412">
    <property type="term" value="P:translation"/>
    <property type="evidence" value="ECO:0007669"/>
    <property type="project" value="UniProtKB-UniRule"/>
</dbReference>
<dbReference type="CDD" id="cd00473">
    <property type="entry name" value="bS6"/>
    <property type="match status" value="1"/>
</dbReference>
<dbReference type="Gene3D" id="3.30.70.60">
    <property type="match status" value="1"/>
</dbReference>
<dbReference type="HAMAP" id="MF_00360">
    <property type="entry name" value="Ribosomal_bS6"/>
    <property type="match status" value="1"/>
</dbReference>
<dbReference type="InterPro" id="IPR000529">
    <property type="entry name" value="Ribosomal_bS6"/>
</dbReference>
<dbReference type="InterPro" id="IPR035980">
    <property type="entry name" value="Ribosomal_bS6_sf"/>
</dbReference>
<dbReference type="InterPro" id="IPR020814">
    <property type="entry name" value="Ribosomal_S6_plastid/chlpt"/>
</dbReference>
<dbReference type="InterPro" id="IPR014717">
    <property type="entry name" value="Transl_elong_EF1B/ribsomal_bS6"/>
</dbReference>
<dbReference type="NCBIfam" id="TIGR00166">
    <property type="entry name" value="S6"/>
    <property type="match status" value="1"/>
</dbReference>
<dbReference type="PANTHER" id="PTHR21011">
    <property type="entry name" value="MITOCHONDRIAL 28S RIBOSOMAL PROTEIN S6"/>
    <property type="match status" value="1"/>
</dbReference>
<dbReference type="PANTHER" id="PTHR21011:SF1">
    <property type="entry name" value="SMALL RIBOSOMAL SUBUNIT PROTEIN BS6M"/>
    <property type="match status" value="1"/>
</dbReference>
<dbReference type="Pfam" id="PF01250">
    <property type="entry name" value="Ribosomal_S6"/>
    <property type="match status" value="1"/>
</dbReference>
<dbReference type="SUPFAM" id="SSF54995">
    <property type="entry name" value="Ribosomal protein S6"/>
    <property type="match status" value="1"/>
</dbReference>
<organism>
    <name type="scientific">Dechloromonas aromatica (strain RCB)</name>
    <dbReference type="NCBI Taxonomy" id="159087"/>
    <lineage>
        <taxon>Bacteria</taxon>
        <taxon>Pseudomonadati</taxon>
        <taxon>Pseudomonadota</taxon>
        <taxon>Betaproteobacteria</taxon>
        <taxon>Rhodocyclales</taxon>
        <taxon>Azonexaceae</taxon>
        <taxon>Dechloromonas</taxon>
    </lineage>
</organism>
<comment type="function">
    <text evidence="1">Binds together with bS18 to 16S ribosomal RNA.</text>
</comment>
<comment type="similarity">
    <text evidence="1">Belongs to the bacterial ribosomal protein bS6 family.</text>
</comment>
<feature type="chain" id="PRO_0000229536" description="Small ribosomal subunit protein bS6">
    <location>
        <begin position="1"/>
        <end position="127"/>
    </location>
</feature>
<feature type="region of interest" description="Disordered" evidence="2">
    <location>
        <begin position="99"/>
        <end position="127"/>
    </location>
</feature>
<feature type="compositionally biased region" description="Low complexity" evidence="2">
    <location>
        <begin position="110"/>
        <end position="127"/>
    </location>
</feature>
<accession>Q47GQ9</accession>
<protein>
    <recommendedName>
        <fullName evidence="1">Small ribosomal subunit protein bS6</fullName>
    </recommendedName>
    <alternativeName>
        <fullName evidence="3">30S ribosomal protein S6</fullName>
    </alternativeName>
</protein>
<proteinExistence type="inferred from homology"/>
<gene>
    <name evidence="1" type="primary">rpsF</name>
    <name type="ordered locus">Daro_1216</name>
</gene>
<keyword id="KW-0687">Ribonucleoprotein</keyword>
<keyword id="KW-0689">Ribosomal protein</keyword>
<keyword id="KW-0694">RNA-binding</keyword>
<keyword id="KW-0699">rRNA-binding</keyword>
<evidence type="ECO:0000255" key="1">
    <source>
        <dbReference type="HAMAP-Rule" id="MF_00360"/>
    </source>
</evidence>
<evidence type="ECO:0000256" key="2">
    <source>
        <dbReference type="SAM" id="MobiDB-lite"/>
    </source>
</evidence>
<evidence type="ECO:0000305" key="3"/>
<sequence length="127" mass="14289">MRHYEICFIVHPDQSEQVPGMVERYRAIVTAKGGSIHRLEDWGRRQLAYPIQKIHKAHYVLMNIECDGDTLNELEHSFKFNDAVLRHLTVKMKAAVTTPSPMMKEEKSKSMMPGDAAPAAPAETAAA</sequence>